<accession>Q8PUJ8</accession>
<dbReference type="EMBL" id="AE008384">
    <property type="protein sequence ID" value="AAM32032.1"/>
    <property type="molecule type" value="Genomic_DNA"/>
</dbReference>
<dbReference type="SMR" id="Q8PUJ8"/>
<dbReference type="KEGG" id="mma:MM_2336"/>
<dbReference type="PATRIC" id="fig|192952.21.peg.2675"/>
<dbReference type="eggNOG" id="arCOG01179">
    <property type="taxonomic scope" value="Archaea"/>
</dbReference>
<dbReference type="HOGENOM" id="CLU_109098_1_2_2"/>
<dbReference type="Proteomes" id="UP000000595">
    <property type="component" value="Chromosome"/>
</dbReference>
<dbReference type="GO" id="GO:0003723">
    <property type="term" value="F:RNA binding"/>
    <property type="evidence" value="ECO:0007669"/>
    <property type="project" value="InterPro"/>
</dbReference>
<dbReference type="GO" id="GO:0003743">
    <property type="term" value="F:translation initiation factor activity"/>
    <property type="evidence" value="ECO:0007669"/>
    <property type="project" value="UniProtKB-UniRule"/>
</dbReference>
<dbReference type="CDD" id="cd05793">
    <property type="entry name" value="S1_IF1A"/>
    <property type="match status" value="1"/>
</dbReference>
<dbReference type="Gene3D" id="2.40.50.140">
    <property type="entry name" value="Nucleic acid-binding proteins"/>
    <property type="match status" value="1"/>
</dbReference>
<dbReference type="HAMAP" id="MF_00216">
    <property type="entry name" value="aIF_1A"/>
    <property type="match status" value="1"/>
</dbReference>
<dbReference type="InterPro" id="IPR012340">
    <property type="entry name" value="NA-bd_OB-fold"/>
</dbReference>
<dbReference type="InterPro" id="IPR006196">
    <property type="entry name" value="RNA-binding_domain_S1_IF1"/>
</dbReference>
<dbReference type="InterPro" id="IPR001253">
    <property type="entry name" value="TIF_eIF-1A"/>
</dbReference>
<dbReference type="InterPro" id="IPR018104">
    <property type="entry name" value="TIF_eIF-1A_CS"/>
</dbReference>
<dbReference type="NCBIfam" id="TIGR00523">
    <property type="entry name" value="eIF-1A"/>
    <property type="match status" value="1"/>
</dbReference>
<dbReference type="NCBIfam" id="NF003084">
    <property type="entry name" value="PRK04012.1-3"/>
    <property type="match status" value="1"/>
</dbReference>
<dbReference type="NCBIfam" id="NF003085">
    <property type="entry name" value="PRK04012.1-5"/>
    <property type="match status" value="1"/>
</dbReference>
<dbReference type="PANTHER" id="PTHR21668">
    <property type="entry name" value="EIF-1A"/>
    <property type="match status" value="1"/>
</dbReference>
<dbReference type="Pfam" id="PF01176">
    <property type="entry name" value="eIF-1a"/>
    <property type="match status" value="1"/>
</dbReference>
<dbReference type="SMART" id="SM00652">
    <property type="entry name" value="eIF1a"/>
    <property type="match status" value="1"/>
</dbReference>
<dbReference type="SUPFAM" id="SSF50249">
    <property type="entry name" value="Nucleic acid-binding proteins"/>
    <property type="match status" value="1"/>
</dbReference>
<dbReference type="PROSITE" id="PS01262">
    <property type="entry name" value="IF1A"/>
    <property type="match status" value="1"/>
</dbReference>
<dbReference type="PROSITE" id="PS50832">
    <property type="entry name" value="S1_IF1_TYPE"/>
    <property type="match status" value="1"/>
</dbReference>
<proteinExistence type="inferred from homology"/>
<keyword id="KW-0396">Initiation factor</keyword>
<keyword id="KW-0648">Protein biosynthesis</keyword>
<evidence type="ECO:0000250" key="1"/>
<evidence type="ECO:0000256" key="2">
    <source>
        <dbReference type="SAM" id="MobiDB-lite"/>
    </source>
</evidence>
<evidence type="ECO:0000305" key="3"/>
<reference key="1">
    <citation type="journal article" date="2002" name="J. Mol. Microbiol. Biotechnol.">
        <title>The genome of Methanosarcina mazei: evidence for lateral gene transfer between Bacteria and Archaea.</title>
        <authorList>
            <person name="Deppenmeier U."/>
            <person name="Johann A."/>
            <person name="Hartsch T."/>
            <person name="Merkl R."/>
            <person name="Schmitz R.A."/>
            <person name="Martinez-Arias R."/>
            <person name="Henne A."/>
            <person name="Wiezer A."/>
            <person name="Baeumer S."/>
            <person name="Jacobi C."/>
            <person name="Brueggemann H."/>
            <person name="Lienard T."/>
            <person name="Christmann A."/>
            <person name="Boemecke M."/>
            <person name="Steckel S."/>
            <person name="Bhattacharyya A."/>
            <person name="Lykidis A."/>
            <person name="Overbeek R."/>
            <person name="Klenk H.-P."/>
            <person name="Gunsalus R.P."/>
            <person name="Fritz H.-J."/>
            <person name="Gottschalk G."/>
        </authorList>
    </citation>
    <scope>NUCLEOTIDE SEQUENCE [LARGE SCALE GENOMIC DNA]</scope>
    <source>
        <strain>ATCC BAA-159 / DSM 3647 / Goe1 / Go1 / JCM 11833 / OCM 88</strain>
    </source>
</reference>
<sequence length="106" mass="12288">MRKRREGTANNSPTPEVTRVRTPRKENHEVLATVGSLLGSKRVNLQCMDGVVRMGRIPGSKNKKMWIREGDIVIATPWEIQDSKADVIWKYTRPQIEWLERKGYLK</sequence>
<protein>
    <recommendedName>
        <fullName>Translation initiation factor 1A 2</fullName>
        <shortName>aIF-1A 2</shortName>
    </recommendedName>
</protein>
<organism>
    <name type="scientific">Methanosarcina mazei (strain ATCC BAA-159 / DSM 3647 / Goe1 / Go1 / JCM 11833 / OCM 88)</name>
    <name type="common">Methanosarcina frisia</name>
    <dbReference type="NCBI Taxonomy" id="192952"/>
    <lineage>
        <taxon>Archaea</taxon>
        <taxon>Methanobacteriati</taxon>
        <taxon>Methanobacteriota</taxon>
        <taxon>Stenosarchaea group</taxon>
        <taxon>Methanomicrobia</taxon>
        <taxon>Methanosarcinales</taxon>
        <taxon>Methanosarcinaceae</taxon>
        <taxon>Methanosarcina</taxon>
    </lineage>
</organism>
<feature type="chain" id="PRO_0000145124" description="Translation initiation factor 1A 2">
    <location>
        <begin position="1"/>
        <end position="106"/>
    </location>
</feature>
<feature type="domain" description="S1-like">
    <location>
        <begin position="18"/>
        <end position="92"/>
    </location>
</feature>
<feature type="region of interest" description="Disordered" evidence="2">
    <location>
        <begin position="1"/>
        <end position="24"/>
    </location>
</feature>
<name>IF1A2_METMA</name>
<gene>
    <name type="primary">eIF1A2</name>
    <name type="ordered locus">MM_2336</name>
</gene>
<comment type="function">
    <text evidence="1">Seems to be required for maximal rate of protein biosynthesis. Enhances ribosome dissociation into subunits and stabilizes the binding of the initiator Met-tRNA(I) to 40 S ribosomal subunits (By similarity).</text>
</comment>
<comment type="similarity">
    <text evidence="3">Belongs to the eIF-1A family.</text>
</comment>